<comment type="function">
    <text evidence="2">May cause hemolysis.</text>
</comment>
<comment type="subcellular location">
    <subcellularLocation>
        <location>Secreted</location>
    </subcellularLocation>
</comment>
<comment type="tissue specificity">
    <text>Expressed by the venom gland.</text>
</comment>
<comment type="miscellaneous">
    <text evidence="3">Only two tryptic peptides have been identified.</text>
</comment>
<comment type="similarity">
    <text evidence="2">Belongs to the phospholipase B-like family.</text>
</comment>
<organism>
    <name type="scientific">Drysdalia coronoides</name>
    <name type="common">White-lipped snake</name>
    <name type="synonym">Hoplocephalus coronoides</name>
    <dbReference type="NCBI Taxonomy" id="66186"/>
    <lineage>
        <taxon>Eukaryota</taxon>
        <taxon>Metazoa</taxon>
        <taxon>Chordata</taxon>
        <taxon>Craniata</taxon>
        <taxon>Vertebrata</taxon>
        <taxon>Euteleostomi</taxon>
        <taxon>Lepidosauria</taxon>
        <taxon>Squamata</taxon>
        <taxon>Bifurcata</taxon>
        <taxon>Unidentata</taxon>
        <taxon>Episquamata</taxon>
        <taxon>Toxicofera</taxon>
        <taxon>Serpentes</taxon>
        <taxon>Colubroidea</taxon>
        <taxon>Elapidae</taxon>
        <taxon>Notechinae</taxon>
        <taxon>Drysdalia</taxon>
    </lineage>
</organism>
<accession>F8J2D3</accession>
<name>PLB_DRYCN</name>
<evidence type="ECO:0000255" key="1"/>
<evidence type="ECO:0000305" key="2"/>
<evidence type="ECO:0000305" key="3">
    <source>
    </source>
</evidence>
<proteinExistence type="evidence at protein level"/>
<keyword id="KW-0204">Cytolysis</keyword>
<keyword id="KW-0325">Glycoprotein</keyword>
<keyword id="KW-0354">Hemolysis</keyword>
<keyword id="KW-0378">Hydrolase</keyword>
<keyword id="KW-0442">Lipid degradation</keyword>
<keyword id="KW-0443">Lipid metabolism</keyword>
<keyword id="KW-0964">Secreted</keyword>
<keyword id="KW-0732">Signal</keyword>
<keyword id="KW-0800">Toxin</keyword>
<dbReference type="EC" id="3.1.1.-"/>
<dbReference type="EMBL" id="FJ752451">
    <property type="protein sequence ID" value="ACR78473.1"/>
    <property type="molecule type" value="mRNA"/>
</dbReference>
<dbReference type="SMR" id="F8J2D3"/>
<dbReference type="GO" id="GO:0005576">
    <property type="term" value="C:extracellular region"/>
    <property type="evidence" value="ECO:0007669"/>
    <property type="project" value="UniProtKB-SubCell"/>
</dbReference>
<dbReference type="GO" id="GO:0004620">
    <property type="term" value="F:phospholipase activity"/>
    <property type="evidence" value="ECO:0007669"/>
    <property type="project" value="InterPro"/>
</dbReference>
<dbReference type="GO" id="GO:0090729">
    <property type="term" value="F:toxin activity"/>
    <property type="evidence" value="ECO:0007669"/>
    <property type="project" value="UniProtKB-KW"/>
</dbReference>
<dbReference type="GO" id="GO:0031640">
    <property type="term" value="P:killing of cells of another organism"/>
    <property type="evidence" value="ECO:0007669"/>
    <property type="project" value="UniProtKB-KW"/>
</dbReference>
<dbReference type="GO" id="GO:0009395">
    <property type="term" value="P:phospholipid catabolic process"/>
    <property type="evidence" value="ECO:0007669"/>
    <property type="project" value="TreeGrafter"/>
</dbReference>
<dbReference type="Gene3D" id="3.60.60.20">
    <property type="match status" value="1"/>
</dbReference>
<dbReference type="Gene3D" id="2.10.70.60">
    <property type="entry name" value="Phospholipase B-like, domain 1"/>
    <property type="match status" value="1"/>
</dbReference>
<dbReference type="Gene3D" id="1.10.439.20">
    <property type="entry name" value="Phospholipase B-like, domain 2"/>
    <property type="match status" value="1"/>
</dbReference>
<dbReference type="InterPro" id="IPR007000">
    <property type="entry name" value="PLipase_B-like"/>
</dbReference>
<dbReference type="InterPro" id="IPR043040">
    <property type="entry name" value="PLipase_B-like_dom1"/>
</dbReference>
<dbReference type="InterPro" id="IPR043041">
    <property type="entry name" value="PLipase_B-like_dom2"/>
</dbReference>
<dbReference type="InterPro" id="IPR043042">
    <property type="entry name" value="PLipase_B-like_dom3"/>
</dbReference>
<dbReference type="PANTHER" id="PTHR12370:SF1">
    <property type="entry name" value="PHOSPHOLIPASE B-LIKE 1"/>
    <property type="match status" value="1"/>
</dbReference>
<dbReference type="PANTHER" id="PTHR12370">
    <property type="entry name" value="PHOSPHOLIPASE B-RELATED"/>
    <property type="match status" value="1"/>
</dbReference>
<dbReference type="Pfam" id="PF04916">
    <property type="entry name" value="Phospholip_B"/>
    <property type="match status" value="1"/>
</dbReference>
<reference key="1">
    <citation type="journal article" date="2011" name="J. Proteome Res.">
        <title>Identification of novel proteins from the venom of a cryptic snake Drysdalia coronoides by a combined transcriptomics and proteomics approach.</title>
        <authorList>
            <person name="Chatrath S.T."/>
            <person name="Chapeaurouge A."/>
            <person name="Lin Q."/>
            <person name="Lim T.K."/>
            <person name="Dunstan N."/>
            <person name="Mirtschin P."/>
            <person name="Kumar P.P."/>
            <person name="Kini R.M."/>
        </authorList>
    </citation>
    <scope>NUCLEOTIDE SEQUENCE [MRNA]</scope>
    <scope>PROBABLE FUNCTION</scope>
    <scope>IDENTIFICATION BY MASS SPECTROMETRY</scope>
    <source>
        <tissue>Venom</tissue>
        <tissue>Venom gland</tissue>
    </source>
</reference>
<sequence>MVRFGSAASSDNRRRRCWSWYWGGLLLLWAVAETRADLHYATVYWLEAEKSFQVKDLLDKNGDAYGYYNDTVQSTGWGILEIKAGYGSQLVSNEILMYAAGFLEGYLTASRMSDHVANLYHQMIKNVITEQKVKDFMQKQDEWTRQQIKNNKDDPFWRNAGYIIAQLDGLYMGNLEWAKRQKRTPLTKFEISFLNALGDLLDLIPALSPESRNNGFLSMSEISKMYEWDMGHCSALIKVLPGYENIYFAHSSWFTYAATLRIYKHLDFRIIDPQTKTGRASFSSYPGLLASLDDFYILGSGLIMLQTTNSVFNISLLQQVVPESLFAWERVRIANMMADSGKTWAQTFKKQNSGTYNNQYMILDTKKIKLRRSIEDGTLYIIEQVPNLVEYSDQTTILRKGYWPSYNIPFHKVIYNMSGYREYVQKYGLDFSYEMAPRAKIFRRDQGKVIDIESMKRIMRYNNYKKDPYTKHNPCNTICCRQDLYYMTPVPAGCYDSKVADINMAAKFTAYAINGPPVEKGLPIFSWVHFNETTHQGLPESYNFDFVTMKPVL</sequence>
<feature type="signal peptide" evidence="1">
    <location>
        <begin position="1"/>
        <end position="35"/>
    </location>
</feature>
<feature type="chain" id="PRO_0000421162" description="Phospholipase-B 81">
    <location>
        <begin position="36"/>
        <end position="553"/>
    </location>
</feature>
<feature type="glycosylation site" description="N-linked (GlcNAc...) asparagine" evidence="1">
    <location>
        <position position="69"/>
    </location>
</feature>
<feature type="glycosylation site" description="N-linked (GlcNAc...) asparagine" evidence="1">
    <location>
        <position position="313"/>
    </location>
</feature>
<feature type="glycosylation site" description="N-linked (GlcNAc...) asparagine" evidence="1">
    <location>
        <position position="416"/>
    </location>
</feature>
<feature type="glycosylation site" description="N-linked (GlcNAc...) asparagine" evidence="1">
    <location>
        <position position="531"/>
    </location>
</feature>
<protein>
    <recommendedName>
        <fullName>Phospholipase-B 81</fullName>
        <shortName>PLB</shortName>
        <ecNumber>3.1.1.-</ecNumber>
    </recommendedName>
</protein>